<sequence length="224" mass="23779">MVILSNVSLFSCCNISQKPSLFSPSSRSSHCPIRCSQSQEGKEVVTSPLRSVVWSLGEEVSKRSLFALVSASLFFVDPALAFKGGGPYGQGVTRGQDLSGKDFSGQTLIRQDFKTSILRQANFKGAKLLGASFFDADLTGADLSEADLRGADFSLANVTKVNLTNANLEGATVTGNTSFKGSNITGADFTDVPLRDDQRVYLCKVADGVNATTGNATRDTLLCN</sequence>
<organism>
    <name type="scientific">Arabidopsis thaliana</name>
    <name type="common">Mouse-ear cress</name>
    <dbReference type="NCBI Taxonomy" id="3702"/>
    <lineage>
        <taxon>Eukaryota</taxon>
        <taxon>Viridiplantae</taxon>
        <taxon>Streptophyta</taxon>
        <taxon>Embryophyta</taxon>
        <taxon>Tracheophyta</taxon>
        <taxon>Spermatophyta</taxon>
        <taxon>Magnoliopsida</taxon>
        <taxon>eudicotyledons</taxon>
        <taxon>Gunneridae</taxon>
        <taxon>Pentapetalae</taxon>
        <taxon>rosids</taxon>
        <taxon>malvids</taxon>
        <taxon>Brassicales</taxon>
        <taxon>Brassicaceae</taxon>
        <taxon>Camelineae</taxon>
        <taxon>Arabidopsis</taxon>
    </lineage>
</organism>
<accession>O22160</accession>
<accession>Q53YH9</accession>
<accession>Q949R8</accession>
<protein>
    <recommendedName>
        <fullName>Thylakoid lumenal 15 kDa protein 1, chloroplastic</fullName>
    </recommendedName>
    <alternativeName>
        <fullName>p15</fullName>
    </alternativeName>
</protein>
<gene>
    <name type="ordered locus">At2g44920</name>
    <name type="ORF">T13E15.7</name>
</gene>
<feature type="transit peptide" description="Chloroplast" evidence="1">
    <location>
        <begin position="1"/>
        <end position="34"/>
    </location>
</feature>
<feature type="transit peptide" description="Thylakoid" evidence="2">
    <location>
        <begin position="35"/>
        <end position="81"/>
    </location>
</feature>
<feature type="chain" id="PRO_0000023523" description="Thylakoid lumenal 15 kDa protein 1, chloroplastic">
    <location>
        <begin position="82"/>
        <end position="224"/>
    </location>
</feature>
<feature type="domain" description="Pentapeptide repeat 1">
    <location>
        <begin position="116"/>
        <end position="155"/>
    </location>
</feature>
<feature type="domain" description="Pentapeptide repeat 2">
    <location>
        <begin position="156"/>
        <end position="196"/>
    </location>
</feature>
<feature type="splice variant" id="VSP_004655" description="In isoform 2." evidence="3">
    <original>DFTDVPLRDDQRVYLCKVADGVNATTGNATRDTLLCN</original>
    <variation>GEKRKENFHNNNKHISLLPLSFT</variation>
    <location>
        <begin position="188"/>
        <end position="224"/>
    </location>
</feature>
<feature type="helix" evidence="4">
    <location>
        <begin position="82"/>
        <end position="85"/>
    </location>
</feature>
<feature type="helix" evidence="4">
    <location>
        <begin position="90"/>
        <end position="93"/>
    </location>
</feature>
<feature type="helix" evidence="4">
    <location>
        <begin position="196"/>
        <end position="205"/>
    </location>
</feature>
<feature type="turn" evidence="4">
    <location>
        <begin position="211"/>
        <end position="213"/>
    </location>
</feature>
<feature type="helix" evidence="4">
    <location>
        <begin position="217"/>
        <end position="220"/>
    </location>
</feature>
<feature type="turn" evidence="4">
    <location>
        <begin position="221"/>
        <end position="224"/>
    </location>
</feature>
<keyword id="KW-0002">3D-structure</keyword>
<keyword id="KW-0025">Alternative splicing</keyword>
<keyword id="KW-0150">Chloroplast</keyword>
<keyword id="KW-0903">Direct protein sequencing</keyword>
<keyword id="KW-0934">Plastid</keyword>
<keyword id="KW-1185">Reference proteome</keyword>
<keyword id="KW-0677">Repeat</keyword>
<keyword id="KW-0793">Thylakoid</keyword>
<keyword id="KW-0809">Transit peptide</keyword>
<reference key="1">
    <citation type="journal article" date="1999" name="Nature">
        <title>Sequence and analysis of chromosome 2 of the plant Arabidopsis thaliana.</title>
        <authorList>
            <person name="Lin X."/>
            <person name="Kaul S."/>
            <person name="Rounsley S.D."/>
            <person name="Shea T.P."/>
            <person name="Benito M.-I."/>
            <person name="Town C.D."/>
            <person name="Fujii C.Y."/>
            <person name="Mason T.M."/>
            <person name="Bowman C.L."/>
            <person name="Barnstead M.E."/>
            <person name="Feldblyum T.V."/>
            <person name="Buell C.R."/>
            <person name="Ketchum K.A."/>
            <person name="Lee J.J."/>
            <person name="Ronning C.M."/>
            <person name="Koo H.L."/>
            <person name="Moffat K.S."/>
            <person name="Cronin L.A."/>
            <person name="Shen M."/>
            <person name="Pai G."/>
            <person name="Van Aken S."/>
            <person name="Umayam L."/>
            <person name="Tallon L.J."/>
            <person name="Gill J.E."/>
            <person name="Adams M.D."/>
            <person name="Carrera A.J."/>
            <person name="Creasy T.H."/>
            <person name="Goodman H.M."/>
            <person name="Somerville C.R."/>
            <person name="Copenhaver G.P."/>
            <person name="Preuss D."/>
            <person name="Nierman W.C."/>
            <person name="White O."/>
            <person name="Eisen J.A."/>
            <person name="Salzberg S.L."/>
            <person name="Fraser C.M."/>
            <person name="Venter J.C."/>
        </authorList>
    </citation>
    <scope>NUCLEOTIDE SEQUENCE [LARGE SCALE GENOMIC DNA]</scope>
    <source>
        <strain>cv. Columbia</strain>
    </source>
</reference>
<reference key="2">
    <citation type="journal article" date="2017" name="Plant J.">
        <title>Araport11: a complete reannotation of the Arabidopsis thaliana reference genome.</title>
        <authorList>
            <person name="Cheng C.Y."/>
            <person name="Krishnakumar V."/>
            <person name="Chan A.P."/>
            <person name="Thibaud-Nissen F."/>
            <person name="Schobel S."/>
            <person name="Town C.D."/>
        </authorList>
    </citation>
    <scope>GENOME REANNOTATION</scope>
    <source>
        <strain>cv. Columbia</strain>
    </source>
</reference>
<reference key="3">
    <citation type="journal article" date="2003" name="Science">
        <title>Empirical analysis of transcriptional activity in the Arabidopsis genome.</title>
        <authorList>
            <person name="Yamada K."/>
            <person name="Lim J."/>
            <person name="Dale J.M."/>
            <person name="Chen H."/>
            <person name="Shinn P."/>
            <person name="Palm C.J."/>
            <person name="Southwick A.M."/>
            <person name="Wu H.C."/>
            <person name="Kim C.J."/>
            <person name="Nguyen M."/>
            <person name="Pham P.K."/>
            <person name="Cheuk R.F."/>
            <person name="Karlin-Newmann G."/>
            <person name="Liu S.X."/>
            <person name="Lam B."/>
            <person name="Sakano H."/>
            <person name="Wu T."/>
            <person name="Yu G."/>
            <person name="Miranda M."/>
            <person name="Quach H.L."/>
            <person name="Tripp M."/>
            <person name="Chang C.H."/>
            <person name="Lee J.M."/>
            <person name="Toriumi M.J."/>
            <person name="Chan M.M."/>
            <person name="Tang C.C."/>
            <person name="Onodera C.S."/>
            <person name="Deng J.M."/>
            <person name="Akiyama K."/>
            <person name="Ansari Y."/>
            <person name="Arakawa T."/>
            <person name="Banh J."/>
            <person name="Banno F."/>
            <person name="Bowser L."/>
            <person name="Brooks S.Y."/>
            <person name="Carninci P."/>
            <person name="Chao Q."/>
            <person name="Choy N."/>
            <person name="Enju A."/>
            <person name="Goldsmith A.D."/>
            <person name="Gurjal M."/>
            <person name="Hansen N.F."/>
            <person name="Hayashizaki Y."/>
            <person name="Johnson-Hopson C."/>
            <person name="Hsuan V.W."/>
            <person name="Iida K."/>
            <person name="Karnes M."/>
            <person name="Khan S."/>
            <person name="Koesema E."/>
            <person name="Ishida J."/>
            <person name="Jiang P.X."/>
            <person name="Jones T."/>
            <person name="Kawai J."/>
            <person name="Kamiya A."/>
            <person name="Meyers C."/>
            <person name="Nakajima M."/>
            <person name="Narusaka M."/>
            <person name="Seki M."/>
            <person name="Sakurai T."/>
            <person name="Satou M."/>
            <person name="Tamse R."/>
            <person name="Vaysberg M."/>
            <person name="Wallender E.K."/>
            <person name="Wong C."/>
            <person name="Yamamura Y."/>
            <person name="Yuan S."/>
            <person name="Shinozaki K."/>
            <person name="Davis R.W."/>
            <person name="Theologis A."/>
            <person name="Ecker J.R."/>
        </authorList>
    </citation>
    <scope>NUCLEOTIDE SEQUENCE [LARGE SCALE MRNA] (ISOFORM 2)</scope>
    <source>
        <strain>cv. Columbia</strain>
    </source>
</reference>
<reference key="4">
    <citation type="journal article" date="2002" name="J. Biol. Chem.">
        <title>Proteome map of the chloroplast lumen of Arabidopsis thaliana.</title>
        <authorList>
            <person name="Schubert M."/>
            <person name="Petersson U.A."/>
            <person name="Haas B.J."/>
            <person name="Funk C."/>
            <person name="Schroeder W.P."/>
            <person name="Kieselbach T."/>
        </authorList>
    </citation>
    <scope>PROTEIN SEQUENCE OF 82-101</scope>
    <scope>SUBCELLULAR LOCATION</scope>
    <source>
        <strain>cv. Columbia</strain>
    </source>
</reference>
<evidence type="ECO:0000255" key="1"/>
<evidence type="ECO:0000269" key="2">
    <source>
    </source>
</evidence>
<evidence type="ECO:0000303" key="3">
    <source>
    </source>
</evidence>
<evidence type="ECO:0007829" key="4">
    <source>
        <dbReference type="PDB" id="3N90"/>
    </source>
</evidence>
<comment type="interaction">
    <interactant intactId="EBI-2895776">
        <id>O22160</id>
    </interactant>
    <interactant intactId="EBI-368542">
        <id>P0AA25</id>
        <label>trxA</label>
    </interactant>
    <organismsDiffer>true</organismsDiffer>
    <experiments>2</experiments>
</comment>
<comment type="subcellular location">
    <subcellularLocation>
        <location evidence="2">Plastid</location>
        <location evidence="2">Chloroplast thylakoid lumen</location>
    </subcellularLocation>
</comment>
<comment type="alternative products">
    <event type="alternative splicing"/>
    <isoform>
        <id>O22160-1</id>
        <name>1</name>
        <sequence type="displayed"/>
    </isoform>
    <isoform>
        <id>O22160-2</id>
        <name>2</name>
        <sequence type="described" ref="VSP_004655"/>
    </isoform>
</comment>
<dbReference type="EMBL" id="AC002388">
    <property type="protein sequence ID" value="AAM14836.1"/>
    <property type="molecule type" value="Genomic_DNA"/>
</dbReference>
<dbReference type="EMBL" id="AC002388">
    <property type="protein sequence ID" value="AAC31832.2"/>
    <property type="molecule type" value="Genomic_DNA"/>
</dbReference>
<dbReference type="EMBL" id="CP002685">
    <property type="protein sequence ID" value="AEC10484.1"/>
    <property type="molecule type" value="Genomic_DNA"/>
</dbReference>
<dbReference type="EMBL" id="CP002685">
    <property type="protein sequence ID" value="AEC10485.1"/>
    <property type="molecule type" value="Genomic_DNA"/>
</dbReference>
<dbReference type="EMBL" id="AY050941">
    <property type="status" value="NOT_ANNOTATED_CDS"/>
    <property type="molecule type" value="mRNA"/>
</dbReference>
<dbReference type="EMBL" id="BT000902">
    <property type="protein sequence ID" value="AAN41302.1"/>
    <property type="molecule type" value="mRNA"/>
</dbReference>
<dbReference type="PIR" id="T00401">
    <property type="entry name" value="T00401"/>
</dbReference>
<dbReference type="RefSeq" id="NP_566030.1">
    <molecule id="O22160-1"/>
    <property type="nucleotide sequence ID" value="NM_130056.6"/>
</dbReference>
<dbReference type="RefSeq" id="NP_566031.1">
    <molecule id="O22160-2"/>
    <property type="nucleotide sequence ID" value="NM_130057.4"/>
</dbReference>
<dbReference type="PDB" id="3N90">
    <property type="method" value="X-ray"/>
    <property type="resolution" value="1.70 A"/>
    <property type="chains" value="A=81-224"/>
</dbReference>
<dbReference type="PDBsum" id="3N90"/>
<dbReference type="SMR" id="O22160"/>
<dbReference type="FunCoup" id="O22160">
    <property type="interactions" value="1711"/>
</dbReference>
<dbReference type="IntAct" id="O22160">
    <property type="interactions" value="1"/>
</dbReference>
<dbReference type="STRING" id="3702.O22160"/>
<dbReference type="PaxDb" id="3702-AT2G44920.2"/>
<dbReference type="ProteomicsDB" id="232459">
    <molecule id="O22160-1"/>
</dbReference>
<dbReference type="EnsemblPlants" id="AT2G44920.1">
    <molecule id="O22160-2"/>
    <property type="protein sequence ID" value="AT2G44920.1"/>
    <property type="gene ID" value="AT2G44920"/>
</dbReference>
<dbReference type="EnsemblPlants" id="AT2G44920.2">
    <molecule id="O22160-1"/>
    <property type="protein sequence ID" value="AT2G44920.2"/>
    <property type="gene ID" value="AT2G44920"/>
</dbReference>
<dbReference type="GeneID" id="819101"/>
<dbReference type="Gramene" id="AT2G44920.1">
    <molecule id="O22160-2"/>
    <property type="protein sequence ID" value="AT2G44920.1"/>
    <property type="gene ID" value="AT2G44920"/>
</dbReference>
<dbReference type="Gramene" id="AT2G44920.2">
    <molecule id="O22160-1"/>
    <property type="protein sequence ID" value="AT2G44920.2"/>
    <property type="gene ID" value="AT2G44920"/>
</dbReference>
<dbReference type="KEGG" id="ath:AT2G44920"/>
<dbReference type="Araport" id="AT2G44920"/>
<dbReference type="TAIR" id="AT2G44920"/>
<dbReference type="eggNOG" id="ENOG502QQA1">
    <property type="taxonomic scope" value="Eukaryota"/>
</dbReference>
<dbReference type="HOGENOM" id="CLU_066336_1_0_1"/>
<dbReference type="InParanoid" id="O22160"/>
<dbReference type="OMA" id="FQERVDY"/>
<dbReference type="OrthoDB" id="9989223at2759"/>
<dbReference type="PhylomeDB" id="O22160"/>
<dbReference type="EvolutionaryTrace" id="O22160"/>
<dbReference type="PRO" id="PR:O22160"/>
<dbReference type="Proteomes" id="UP000006548">
    <property type="component" value="Chromosome 2"/>
</dbReference>
<dbReference type="ExpressionAtlas" id="O22160">
    <property type="expression patterns" value="baseline and differential"/>
</dbReference>
<dbReference type="GO" id="GO:0009507">
    <property type="term" value="C:chloroplast"/>
    <property type="evidence" value="ECO:0007005"/>
    <property type="project" value="TAIR"/>
</dbReference>
<dbReference type="GO" id="GO:0009534">
    <property type="term" value="C:chloroplast thylakoid"/>
    <property type="evidence" value="ECO:0007005"/>
    <property type="project" value="TAIR"/>
</dbReference>
<dbReference type="GO" id="GO:0009543">
    <property type="term" value="C:chloroplast thylakoid lumen"/>
    <property type="evidence" value="ECO:0000314"/>
    <property type="project" value="UniProtKB"/>
</dbReference>
<dbReference type="GO" id="GO:0009535">
    <property type="term" value="C:chloroplast thylakoid membrane"/>
    <property type="evidence" value="ECO:0007005"/>
    <property type="project" value="TAIR"/>
</dbReference>
<dbReference type="GO" id="GO:0005829">
    <property type="term" value="C:cytosol"/>
    <property type="evidence" value="ECO:0007005"/>
    <property type="project" value="TAIR"/>
</dbReference>
<dbReference type="GO" id="GO:0009579">
    <property type="term" value="C:thylakoid"/>
    <property type="evidence" value="ECO:0007005"/>
    <property type="project" value="TAIR"/>
</dbReference>
<dbReference type="GO" id="GO:0031977">
    <property type="term" value="C:thylakoid lumen"/>
    <property type="evidence" value="ECO:0007005"/>
    <property type="project" value="TAIR"/>
</dbReference>
<dbReference type="FunFam" id="2.160.20.80:FF:000003">
    <property type="entry name" value="thylakoid lumenal 15 kDa protein 1, chloroplastic"/>
    <property type="match status" value="1"/>
</dbReference>
<dbReference type="Gene3D" id="2.160.20.80">
    <property type="entry name" value="E3 ubiquitin-protein ligase SopA"/>
    <property type="match status" value="1"/>
</dbReference>
<dbReference type="InterPro" id="IPR001646">
    <property type="entry name" value="5peptide_repeat"/>
</dbReference>
<dbReference type="InterPro" id="IPR044213">
    <property type="entry name" value="At2g44920-like"/>
</dbReference>
<dbReference type="PANTHER" id="PTHR47200">
    <property type="entry name" value="THYLAKOID LUMENAL 15 KDA PROTEIN 1, CHLOROPLASTIC"/>
    <property type="match status" value="1"/>
</dbReference>
<dbReference type="PANTHER" id="PTHR47200:SF2">
    <property type="entry name" value="THYLAKOID LUMENAL 15 KDA PROTEIN 1, CHLOROPLASTIC"/>
    <property type="match status" value="1"/>
</dbReference>
<dbReference type="Pfam" id="PF00805">
    <property type="entry name" value="Pentapeptide"/>
    <property type="match status" value="2"/>
</dbReference>
<dbReference type="SUPFAM" id="SSF141571">
    <property type="entry name" value="Pentapeptide repeat-like"/>
    <property type="match status" value="1"/>
</dbReference>
<name>TL15A_ARATH</name>
<proteinExistence type="evidence at protein level"/>